<gene>
    <name type="primary">CAF17</name>
    <name type="ordered locus">CAGL0H00484g</name>
</gene>
<name>CAF17_CANGA</name>
<evidence type="ECO:0000250" key="1">
    <source>
        <dbReference type="UniProtKB" id="P47158"/>
    </source>
</evidence>
<evidence type="ECO:0000255" key="2"/>
<evidence type="ECO:0000256" key="3">
    <source>
        <dbReference type="SAM" id="MobiDB-lite"/>
    </source>
</evidence>
<evidence type="ECO:0000305" key="4"/>
<comment type="subcellular location">
    <subcellularLocation>
        <location evidence="1">Mitochondrion matrix</location>
    </subcellularLocation>
</comment>
<comment type="similarity">
    <text evidence="4">Belongs to the GcvT family. CAF17/IBA57 subfamily.</text>
</comment>
<protein>
    <recommendedName>
        <fullName>Iron-sulfur cluster assembly factor IBA57 homolog, mitochondrial</fullName>
    </recommendedName>
</protein>
<dbReference type="EMBL" id="CR380954">
    <property type="protein sequence ID" value="CAG59750.1"/>
    <property type="molecule type" value="Genomic_DNA"/>
</dbReference>
<dbReference type="RefSeq" id="XP_446819.1">
    <property type="nucleotide sequence ID" value="XM_446819.1"/>
</dbReference>
<dbReference type="FunCoup" id="Q6FSH5">
    <property type="interactions" value="332"/>
</dbReference>
<dbReference type="STRING" id="284593.Q6FSH5"/>
<dbReference type="EnsemblFungi" id="CAGL0H00484g-T">
    <property type="protein sequence ID" value="CAGL0H00484g-T-p1"/>
    <property type="gene ID" value="CAGL0H00484g"/>
</dbReference>
<dbReference type="KEGG" id="cgr:2888811"/>
<dbReference type="CGD" id="CAL0131432">
    <property type="gene designation" value="CAGL0H00484g"/>
</dbReference>
<dbReference type="VEuPathDB" id="FungiDB:CAGL0H00484g"/>
<dbReference type="eggNOG" id="KOG2929">
    <property type="taxonomic scope" value="Eukaryota"/>
</dbReference>
<dbReference type="HOGENOM" id="CLU_007884_7_3_1"/>
<dbReference type="InParanoid" id="Q6FSH5"/>
<dbReference type="OMA" id="PFECNLD"/>
<dbReference type="Proteomes" id="UP000002428">
    <property type="component" value="Chromosome H"/>
</dbReference>
<dbReference type="GO" id="GO:0005759">
    <property type="term" value="C:mitochondrial matrix"/>
    <property type="evidence" value="ECO:0007669"/>
    <property type="project" value="EnsemblFungi"/>
</dbReference>
<dbReference type="GO" id="GO:0016740">
    <property type="term" value="F:transferase activity"/>
    <property type="evidence" value="ECO:0007669"/>
    <property type="project" value="UniProtKB-KW"/>
</dbReference>
<dbReference type="GO" id="GO:0016226">
    <property type="term" value="P:iron-sulfur cluster assembly"/>
    <property type="evidence" value="ECO:0007669"/>
    <property type="project" value="TreeGrafter"/>
</dbReference>
<dbReference type="GO" id="GO:0051604">
    <property type="term" value="P:protein maturation"/>
    <property type="evidence" value="ECO:0007669"/>
    <property type="project" value="EnsemblFungi"/>
</dbReference>
<dbReference type="Gene3D" id="2.40.30.160">
    <property type="match status" value="1"/>
</dbReference>
<dbReference type="InterPro" id="IPR045179">
    <property type="entry name" value="YgfZ/GcvT"/>
</dbReference>
<dbReference type="InterPro" id="IPR017703">
    <property type="entry name" value="YgfZ/GcvT_CS"/>
</dbReference>
<dbReference type="NCBIfam" id="TIGR03317">
    <property type="entry name" value="ygfZ_signature"/>
    <property type="match status" value="1"/>
</dbReference>
<dbReference type="PANTHER" id="PTHR22602">
    <property type="entry name" value="TRANSFERASE CAF17, MITOCHONDRIAL-RELATED"/>
    <property type="match status" value="1"/>
</dbReference>
<dbReference type="PANTHER" id="PTHR22602:SF0">
    <property type="entry name" value="TRANSFERASE CAF17, MITOCHONDRIAL-RELATED"/>
    <property type="match status" value="1"/>
</dbReference>
<dbReference type="Pfam" id="PF25455">
    <property type="entry name" value="Beta-barrel_CAF17_C"/>
    <property type="match status" value="1"/>
</dbReference>
<dbReference type="SUPFAM" id="SSF103025">
    <property type="entry name" value="Folate-binding domain"/>
    <property type="match status" value="1"/>
</dbReference>
<keyword id="KW-0496">Mitochondrion</keyword>
<keyword id="KW-1185">Reference proteome</keyword>
<keyword id="KW-0809">Transit peptide</keyword>
<organism>
    <name type="scientific">Candida glabrata (strain ATCC 2001 / BCRC 20586 / JCM 3761 / NBRC 0622 / NRRL Y-65 / CBS 138)</name>
    <name type="common">Yeast</name>
    <name type="synonym">Nakaseomyces glabratus</name>
    <dbReference type="NCBI Taxonomy" id="284593"/>
    <lineage>
        <taxon>Eukaryota</taxon>
        <taxon>Fungi</taxon>
        <taxon>Dikarya</taxon>
        <taxon>Ascomycota</taxon>
        <taxon>Saccharomycotina</taxon>
        <taxon>Saccharomycetes</taxon>
        <taxon>Saccharomycetales</taxon>
        <taxon>Saccharomycetaceae</taxon>
        <taxon>Nakaseomyces</taxon>
    </lineage>
</organism>
<sequence>MMKTLTRSILDLTRSSKNAVSIQCGRRFISSIKATNLDNALLVYGEIPNKSYLQVRGPDTIGFLNGLVTSKLLPTFVKKNLTTIEVSDEKNKKDTNNNESPEFNEKKGNWGIYNAESHNGPYLSRFGIYSAFLNGKGKLVTDSIIYPSPGVVNDQTEAKIKLYPEYLLEFDKDIIPRMLTSFESHKLHNKIKFEEVKNTKTWDFFISFPGLTQNDPNPWIDNVYVPLTYLKNAEASNEFAESFITSLFPKISNKILGFYIERRTETLLNNDGTAPQFFRIVTTEDVDNAFDAFNSEAFPFTFEKLEKDSSFFKQCKLQYGFLDGSDAIQPDSLMPLELNFDYFPNTVSNNKGCYVGQELTARTYSTGILRKRLIPIEFENLSEQAVKLLNECDKYPDIEVEVDPKNQEPEPLQSTAPSPFGNSPFGNASTKLRQRKKAAGTLISFDGKYGIALFRIEHFKNIYDTPTPSKFFLTIGQEKIDVTPQRPIWYNEWKSSQ</sequence>
<reference key="1">
    <citation type="journal article" date="2004" name="Nature">
        <title>Genome evolution in yeasts.</title>
        <authorList>
            <person name="Dujon B."/>
            <person name="Sherman D."/>
            <person name="Fischer G."/>
            <person name="Durrens P."/>
            <person name="Casaregola S."/>
            <person name="Lafontaine I."/>
            <person name="de Montigny J."/>
            <person name="Marck C."/>
            <person name="Neuveglise C."/>
            <person name="Talla E."/>
            <person name="Goffard N."/>
            <person name="Frangeul L."/>
            <person name="Aigle M."/>
            <person name="Anthouard V."/>
            <person name="Babour A."/>
            <person name="Barbe V."/>
            <person name="Barnay S."/>
            <person name="Blanchin S."/>
            <person name="Beckerich J.-M."/>
            <person name="Beyne E."/>
            <person name="Bleykasten C."/>
            <person name="Boisrame A."/>
            <person name="Boyer J."/>
            <person name="Cattolico L."/>
            <person name="Confanioleri F."/>
            <person name="de Daruvar A."/>
            <person name="Despons L."/>
            <person name="Fabre E."/>
            <person name="Fairhead C."/>
            <person name="Ferry-Dumazet H."/>
            <person name="Groppi A."/>
            <person name="Hantraye F."/>
            <person name="Hennequin C."/>
            <person name="Jauniaux N."/>
            <person name="Joyet P."/>
            <person name="Kachouri R."/>
            <person name="Kerrest A."/>
            <person name="Koszul R."/>
            <person name="Lemaire M."/>
            <person name="Lesur I."/>
            <person name="Ma L."/>
            <person name="Muller H."/>
            <person name="Nicaud J.-M."/>
            <person name="Nikolski M."/>
            <person name="Oztas S."/>
            <person name="Ozier-Kalogeropoulos O."/>
            <person name="Pellenz S."/>
            <person name="Potier S."/>
            <person name="Richard G.-F."/>
            <person name="Straub M.-L."/>
            <person name="Suleau A."/>
            <person name="Swennen D."/>
            <person name="Tekaia F."/>
            <person name="Wesolowski-Louvel M."/>
            <person name="Westhof E."/>
            <person name="Wirth B."/>
            <person name="Zeniou-Meyer M."/>
            <person name="Zivanovic Y."/>
            <person name="Bolotin-Fukuhara M."/>
            <person name="Thierry A."/>
            <person name="Bouchier C."/>
            <person name="Caudron B."/>
            <person name="Scarpelli C."/>
            <person name="Gaillardin C."/>
            <person name="Weissenbach J."/>
            <person name="Wincker P."/>
            <person name="Souciet J.-L."/>
        </authorList>
    </citation>
    <scope>NUCLEOTIDE SEQUENCE [LARGE SCALE GENOMIC DNA]</scope>
    <source>
        <strain>ATCC 2001 / BCRC 20586 / JCM 3761 / NBRC 0622 / NRRL Y-65 / CBS 138</strain>
    </source>
</reference>
<feature type="transit peptide" description="Mitochondrion" evidence="2">
    <location>
        <begin position="1"/>
        <end position="36"/>
    </location>
</feature>
<feature type="chain" id="PRO_0000301695" description="Iron-sulfur cluster assembly factor IBA57 homolog, mitochondrial">
    <location>
        <begin position="37"/>
        <end position="497"/>
    </location>
</feature>
<feature type="region of interest" description="Disordered" evidence="3">
    <location>
        <begin position="88"/>
        <end position="107"/>
    </location>
</feature>
<feature type="region of interest" description="Disordered" evidence="3">
    <location>
        <begin position="404"/>
        <end position="428"/>
    </location>
</feature>
<feature type="compositionally biased region" description="Polar residues" evidence="3">
    <location>
        <begin position="412"/>
        <end position="428"/>
    </location>
</feature>
<accession>Q6FSH5</accession>
<proteinExistence type="inferred from homology"/>